<dbReference type="EMBL" id="BX571688">
    <property type="protein sequence ID" value="CAP09533.1"/>
    <property type="molecule type" value="Genomic_DNA"/>
</dbReference>
<dbReference type="EMBL" id="BC134933">
    <property type="protein sequence ID" value="AAI34934.1"/>
    <property type="molecule type" value="mRNA"/>
</dbReference>
<dbReference type="EMBL" id="AB303429">
    <property type="protein sequence ID" value="BAF62166.1"/>
    <property type="molecule type" value="mRNA"/>
</dbReference>
<dbReference type="RefSeq" id="NP_001103933.1">
    <molecule id="A4IG55-2"/>
    <property type="nucleotide sequence ID" value="NM_001110463.1"/>
</dbReference>
<dbReference type="SMR" id="A4IG55"/>
<dbReference type="STRING" id="7955.ENSDARP00000081436"/>
<dbReference type="PaxDb" id="7955-ENSDARP00000081436"/>
<dbReference type="GeneID" id="563283"/>
<dbReference type="KEGG" id="dre:563283"/>
<dbReference type="AGR" id="ZFIN:ZDB-GENE-060503-433"/>
<dbReference type="CTD" id="563283"/>
<dbReference type="ZFIN" id="ZDB-GENE-060503-433">
    <property type="gene designation" value="plekho1a"/>
</dbReference>
<dbReference type="eggNOG" id="ENOG502RKBY">
    <property type="taxonomic scope" value="Eukaryota"/>
</dbReference>
<dbReference type="InParanoid" id="A4IG55"/>
<dbReference type="OrthoDB" id="6358316at2759"/>
<dbReference type="PhylomeDB" id="A4IG55"/>
<dbReference type="TreeFam" id="TF333115"/>
<dbReference type="PRO" id="PR:A4IG55"/>
<dbReference type="Proteomes" id="UP000000437">
    <property type="component" value="Chromosome 19"/>
</dbReference>
<dbReference type="GO" id="GO:0005737">
    <property type="term" value="C:cytoplasm"/>
    <property type="evidence" value="ECO:0007669"/>
    <property type="project" value="UniProtKB-SubCell"/>
</dbReference>
<dbReference type="GO" id="GO:0036195">
    <property type="term" value="C:muscle cell projection membrane"/>
    <property type="evidence" value="ECO:0000318"/>
    <property type="project" value="GO_Central"/>
</dbReference>
<dbReference type="GO" id="GO:0005634">
    <property type="term" value="C:nucleus"/>
    <property type="evidence" value="ECO:0007669"/>
    <property type="project" value="UniProtKB-SubCell"/>
</dbReference>
<dbReference type="GO" id="GO:0032587">
    <property type="term" value="C:ruffle membrane"/>
    <property type="evidence" value="ECO:0000318"/>
    <property type="project" value="GO_Central"/>
</dbReference>
<dbReference type="GO" id="GO:1901739">
    <property type="term" value="P:regulation of myoblast fusion"/>
    <property type="evidence" value="ECO:0000318"/>
    <property type="project" value="GO_Central"/>
</dbReference>
<dbReference type="CDD" id="cd13317">
    <property type="entry name" value="PH_PLEKHO1_PLEKHO2"/>
    <property type="match status" value="1"/>
</dbReference>
<dbReference type="Gene3D" id="2.30.29.30">
    <property type="entry name" value="Pleckstrin-homology domain (PH domain)/Phosphotyrosine-binding domain (PTB)"/>
    <property type="match status" value="1"/>
</dbReference>
<dbReference type="InterPro" id="IPR011993">
    <property type="entry name" value="PH-like_dom_sf"/>
</dbReference>
<dbReference type="InterPro" id="IPR001849">
    <property type="entry name" value="PH_domain"/>
</dbReference>
<dbReference type="InterPro" id="IPR043448">
    <property type="entry name" value="PKHO1/2"/>
</dbReference>
<dbReference type="PANTHER" id="PTHR15871">
    <property type="entry name" value="PH DOMAIN-CONTAINING PROTEIN"/>
    <property type="match status" value="1"/>
</dbReference>
<dbReference type="PANTHER" id="PTHR15871:SF1">
    <property type="entry name" value="PLECKSTRIN HOMOLOGY DOMAIN-CONTAINING FAMILY O MEMBER 1"/>
    <property type="match status" value="1"/>
</dbReference>
<dbReference type="Pfam" id="PF00169">
    <property type="entry name" value="PH"/>
    <property type="match status" value="1"/>
</dbReference>
<dbReference type="SMART" id="SM00233">
    <property type="entry name" value="PH"/>
    <property type="match status" value="1"/>
</dbReference>
<dbReference type="SUPFAM" id="SSF50729">
    <property type="entry name" value="PH domain-like"/>
    <property type="match status" value="1"/>
</dbReference>
<dbReference type="PROSITE" id="PS50003">
    <property type="entry name" value="PH_DOMAIN"/>
    <property type="match status" value="1"/>
</dbReference>
<gene>
    <name type="primary">plekho1a</name>
    <name type="synonym">ckip</name>
    <name type="synonym">plekho1</name>
    <name type="ORF">si:dkey-200h23.2</name>
</gene>
<protein>
    <recommendedName>
        <fullName>Pleckstrin homology domain-containing family O member 1-A</fullName>
        <shortName>PH domain-containing family O member 1-A</shortName>
    </recommendedName>
    <alternativeName>
        <fullName>Casein kinase 2-interacting protein 1</fullName>
        <shortName>CK2-interacting protein 1</shortName>
        <shortName>CKIP-1</shortName>
    </alternativeName>
</protein>
<proteinExistence type="evidence at transcript level"/>
<organism>
    <name type="scientific">Danio rerio</name>
    <name type="common">Zebrafish</name>
    <name type="synonym">Brachydanio rerio</name>
    <dbReference type="NCBI Taxonomy" id="7955"/>
    <lineage>
        <taxon>Eukaryota</taxon>
        <taxon>Metazoa</taxon>
        <taxon>Chordata</taxon>
        <taxon>Craniata</taxon>
        <taxon>Vertebrata</taxon>
        <taxon>Euteleostomi</taxon>
        <taxon>Actinopterygii</taxon>
        <taxon>Neopterygii</taxon>
        <taxon>Teleostei</taxon>
        <taxon>Ostariophysi</taxon>
        <taxon>Cypriniformes</taxon>
        <taxon>Danionidae</taxon>
        <taxon>Danioninae</taxon>
        <taxon>Danio</taxon>
    </lineage>
</organism>
<name>PKHO1_DANRE</name>
<comment type="function">
    <text evidence="1">Plays a role in the regulation of the actin cytoskeleton through its interactions with actin capping protein (CP).</text>
</comment>
<comment type="subcellular location">
    <subcellularLocation>
        <location evidence="1">Membrane</location>
    </subcellularLocation>
    <subcellularLocation>
        <location evidence="1">Nucleus</location>
    </subcellularLocation>
    <subcellularLocation>
        <location evidence="1">Cytoplasm</location>
    </subcellularLocation>
</comment>
<comment type="alternative products">
    <event type="alternative splicing"/>
    <isoform>
        <id>A4IG55-1</id>
        <name>1</name>
        <sequence type="displayed"/>
    </isoform>
    <isoform>
        <id>A4IG55-2</id>
        <name>2</name>
        <sequence type="described" ref="VSP_032043"/>
    </isoform>
</comment>
<comment type="PTM">
    <text evidence="1">C-terminal fragments could be released during apoptosis via caspase-3-dependent cleavage.</text>
</comment>
<keyword id="KW-0025">Alternative splicing</keyword>
<keyword id="KW-0963">Cytoplasm</keyword>
<keyword id="KW-0472">Membrane</keyword>
<keyword id="KW-0539">Nucleus</keyword>
<keyword id="KW-1185">Reference proteome</keyword>
<feature type="chain" id="PRO_0000310427" description="Pleckstrin homology domain-containing family O member 1-A">
    <location>
        <begin position="1"/>
        <end position="520"/>
    </location>
</feature>
<feature type="domain" description="PH" evidence="2">
    <location>
        <begin position="20"/>
        <end position="131"/>
    </location>
</feature>
<feature type="region of interest" description="Disordered" evidence="3">
    <location>
        <begin position="1"/>
        <end position="23"/>
    </location>
</feature>
<feature type="region of interest" description="Disordered" evidence="3">
    <location>
        <begin position="208"/>
        <end position="296"/>
    </location>
</feature>
<feature type="region of interest" description="Disordered" evidence="3">
    <location>
        <begin position="313"/>
        <end position="439"/>
    </location>
</feature>
<feature type="region of interest" description="Disordered" evidence="3">
    <location>
        <begin position="497"/>
        <end position="520"/>
    </location>
</feature>
<feature type="compositionally biased region" description="Polar residues" evidence="3">
    <location>
        <begin position="227"/>
        <end position="241"/>
    </location>
</feature>
<feature type="compositionally biased region" description="Basic and acidic residues" evidence="3">
    <location>
        <begin position="242"/>
        <end position="255"/>
    </location>
</feature>
<feature type="compositionally biased region" description="Basic and acidic residues" evidence="3">
    <location>
        <begin position="333"/>
        <end position="347"/>
    </location>
</feature>
<feature type="compositionally biased region" description="Low complexity" evidence="3">
    <location>
        <begin position="348"/>
        <end position="361"/>
    </location>
</feature>
<feature type="compositionally biased region" description="Basic and acidic residues" evidence="3">
    <location>
        <begin position="363"/>
        <end position="385"/>
    </location>
</feature>
<feature type="compositionally biased region" description="Basic and acidic residues" evidence="3">
    <location>
        <begin position="396"/>
        <end position="418"/>
    </location>
</feature>
<feature type="compositionally biased region" description="Polar residues" evidence="3">
    <location>
        <begin position="420"/>
        <end position="439"/>
    </location>
</feature>
<feature type="compositionally biased region" description="Basic and acidic residues" evidence="3">
    <location>
        <begin position="497"/>
        <end position="506"/>
    </location>
</feature>
<feature type="compositionally biased region" description="Polar residues" evidence="3">
    <location>
        <begin position="509"/>
        <end position="520"/>
    </location>
</feature>
<feature type="splice variant" id="VSP_032043" description="In isoform 2." evidence="4">
    <location>
        <begin position="141"/>
        <end position="174"/>
    </location>
</feature>
<feature type="sequence conflict" description="In Ref. 3; BAF62166." evidence="5" ref="3">
    <original>N</original>
    <variation>V</variation>
    <location>
        <position position="230"/>
    </location>
</feature>
<feature type="sequence conflict" description="In Ref. 1; CAP09533." evidence="5" ref="1">
    <original>E</original>
    <variation>D</variation>
    <location>
        <position position="245"/>
    </location>
</feature>
<feature type="sequence conflict" description="In Ref. 3; BAF62166." evidence="5" ref="3">
    <original>D</original>
    <variation>N</variation>
    <location>
        <position position="415"/>
    </location>
</feature>
<reference key="1">
    <citation type="journal article" date="2013" name="Nature">
        <title>The zebrafish reference genome sequence and its relationship to the human genome.</title>
        <authorList>
            <person name="Howe K."/>
            <person name="Clark M.D."/>
            <person name="Torroja C.F."/>
            <person name="Torrance J."/>
            <person name="Berthelot C."/>
            <person name="Muffato M."/>
            <person name="Collins J.E."/>
            <person name="Humphray S."/>
            <person name="McLaren K."/>
            <person name="Matthews L."/>
            <person name="McLaren S."/>
            <person name="Sealy I."/>
            <person name="Caccamo M."/>
            <person name="Churcher C."/>
            <person name="Scott C."/>
            <person name="Barrett J.C."/>
            <person name="Koch R."/>
            <person name="Rauch G.J."/>
            <person name="White S."/>
            <person name="Chow W."/>
            <person name="Kilian B."/>
            <person name="Quintais L.T."/>
            <person name="Guerra-Assuncao J.A."/>
            <person name="Zhou Y."/>
            <person name="Gu Y."/>
            <person name="Yen J."/>
            <person name="Vogel J.H."/>
            <person name="Eyre T."/>
            <person name="Redmond S."/>
            <person name="Banerjee R."/>
            <person name="Chi J."/>
            <person name="Fu B."/>
            <person name="Langley E."/>
            <person name="Maguire S.F."/>
            <person name="Laird G.K."/>
            <person name="Lloyd D."/>
            <person name="Kenyon E."/>
            <person name="Donaldson S."/>
            <person name="Sehra H."/>
            <person name="Almeida-King J."/>
            <person name="Loveland J."/>
            <person name="Trevanion S."/>
            <person name="Jones M."/>
            <person name="Quail M."/>
            <person name="Willey D."/>
            <person name="Hunt A."/>
            <person name="Burton J."/>
            <person name="Sims S."/>
            <person name="McLay K."/>
            <person name="Plumb B."/>
            <person name="Davis J."/>
            <person name="Clee C."/>
            <person name="Oliver K."/>
            <person name="Clark R."/>
            <person name="Riddle C."/>
            <person name="Elliot D."/>
            <person name="Threadgold G."/>
            <person name="Harden G."/>
            <person name="Ware D."/>
            <person name="Begum S."/>
            <person name="Mortimore B."/>
            <person name="Kerry G."/>
            <person name="Heath P."/>
            <person name="Phillimore B."/>
            <person name="Tracey A."/>
            <person name="Corby N."/>
            <person name="Dunn M."/>
            <person name="Johnson C."/>
            <person name="Wood J."/>
            <person name="Clark S."/>
            <person name="Pelan S."/>
            <person name="Griffiths G."/>
            <person name="Smith M."/>
            <person name="Glithero R."/>
            <person name="Howden P."/>
            <person name="Barker N."/>
            <person name="Lloyd C."/>
            <person name="Stevens C."/>
            <person name="Harley J."/>
            <person name="Holt K."/>
            <person name="Panagiotidis G."/>
            <person name="Lovell J."/>
            <person name="Beasley H."/>
            <person name="Henderson C."/>
            <person name="Gordon D."/>
            <person name="Auger K."/>
            <person name="Wright D."/>
            <person name="Collins J."/>
            <person name="Raisen C."/>
            <person name="Dyer L."/>
            <person name="Leung K."/>
            <person name="Robertson L."/>
            <person name="Ambridge K."/>
            <person name="Leongamornlert D."/>
            <person name="McGuire S."/>
            <person name="Gilderthorp R."/>
            <person name="Griffiths C."/>
            <person name="Manthravadi D."/>
            <person name="Nichol S."/>
            <person name="Barker G."/>
            <person name="Whitehead S."/>
            <person name="Kay M."/>
            <person name="Brown J."/>
            <person name="Murnane C."/>
            <person name="Gray E."/>
            <person name="Humphries M."/>
            <person name="Sycamore N."/>
            <person name="Barker D."/>
            <person name="Saunders D."/>
            <person name="Wallis J."/>
            <person name="Babbage A."/>
            <person name="Hammond S."/>
            <person name="Mashreghi-Mohammadi M."/>
            <person name="Barr L."/>
            <person name="Martin S."/>
            <person name="Wray P."/>
            <person name="Ellington A."/>
            <person name="Matthews N."/>
            <person name="Ellwood M."/>
            <person name="Woodmansey R."/>
            <person name="Clark G."/>
            <person name="Cooper J."/>
            <person name="Tromans A."/>
            <person name="Grafham D."/>
            <person name="Skuce C."/>
            <person name="Pandian R."/>
            <person name="Andrews R."/>
            <person name="Harrison E."/>
            <person name="Kimberley A."/>
            <person name="Garnett J."/>
            <person name="Fosker N."/>
            <person name="Hall R."/>
            <person name="Garner P."/>
            <person name="Kelly D."/>
            <person name="Bird C."/>
            <person name="Palmer S."/>
            <person name="Gehring I."/>
            <person name="Berger A."/>
            <person name="Dooley C.M."/>
            <person name="Ersan-Urun Z."/>
            <person name="Eser C."/>
            <person name="Geiger H."/>
            <person name="Geisler M."/>
            <person name="Karotki L."/>
            <person name="Kirn A."/>
            <person name="Konantz J."/>
            <person name="Konantz M."/>
            <person name="Oberlander M."/>
            <person name="Rudolph-Geiger S."/>
            <person name="Teucke M."/>
            <person name="Lanz C."/>
            <person name="Raddatz G."/>
            <person name="Osoegawa K."/>
            <person name="Zhu B."/>
            <person name="Rapp A."/>
            <person name="Widaa S."/>
            <person name="Langford C."/>
            <person name="Yang F."/>
            <person name="Schuster S.C."/>
            <person name="Carter N.P."/>
            <person name="Harrow J."/>
            <person name="Ning Z."/>
            <person name="Herrero J."/>
            <person name="Searle S.M."/>
            <person name="Enright A."/>
            <person name="Geisler R."/>
            <person name="Plasterk R.H."/>
            <person name="Lee C."/>
            <person name="Westerfield M."/>
            <person name="de Jong P.J."/>
            <person name="Zon L.I."/>
            <person name="Postlethwait J.H."/>
            <person name="Nusslein-Volhard C."/>
            <person name="Hubbard T.J."/>
            <person name="Roest Crollius H."/>
            <person name="Rogers J."/>
            <person name="Stemple D.L."/>
        </authorList>
    </citation>
    <scope>NUCLEOTIDE SEQUENCE [LARGE SCALE GENOMIC DNA]</scope>
    <source>
        <strain>Tuebingen</strain>
    </source>
</reference>
<reference key="2">
    <citation type="submission" date="2007-03" db="EMBL/GenBank/DDBJ databases">
        <authorList>
            <consortium name="NIH - Zebrafish Gene Collection (ZGC) project"/>
        </authorList>
    </citation>
    <scope>NUCLEOTIDE SEQUENCE [LARGE SCALE MRNA] (ISOFORM 2)</scope>
    <source>
        <tissue>Embryo</tissue>
    </source>
</reference>
<reference key="3">
    <citation type="journal article" date="2008" name="Development">
        <title>Insertional mutagenesis by the Tol2 transposon-mediated enhancer trap approach generated mutations in two developmental genes: tcf7 and synembryn-like.</title>
        <authorList>
            <person name="Nagayoshi S."/>
            <person name="Hayashi E."/>
            <person name="Abe G."/>
            <person name="Osato N."/>
            <person name="Asakawa K."/>
            <person name="Urasaki A."/>
            <person name="Horikawa K."/>
            <person name="Ikeo K."/>
            <person name="Takeda H."/>
            <person name="Kawakami K."/>
        </authorList>
    </citation>
    <scope>NUCLEOTIDE SEQUENCE [MRNA] OF 69-520 (ISOFORM 1)</scope>
</reference>
<sequence length="520" mass="58751">MKKSHLVKRGLQDANQPSSQPDKVGWIRRFSGKGIFREIWRNRFVMLKGDHLFIFEKEMKNNGKTHEVFDLVHYERSEELRKAKSHSKKNHSKFTLLRCQHPGNKSPNLVFLAVSPEEKESWINVLNTAITRAKNRVLDEVTIEEESLLAHPTRDRAKIPLGRRLPTRGHLMAVGSASSDGMLTLDLVNEEDAAMLDEDEWLKDHRASLDKLAPGRRRAGTDASRPPASNTEAQEKTSSLPRKSEISWSQEDHPRTPQNKKKFAQVRNRCASMDDALSRGERKPKKNIPSPTGHLQDLITQRLQRTQELLAQIQEQEPHRGRMGSYPYLRGIDSPRLRHLKGSDSPHSKGSSSPHSANSPSVRAKDSPSSKSKESPHAKSKDSPRFKSSKNALRSKSIDSPDSKESSSLHMKCIDLTHIKGSQSPLSTGSNSPHMKSTDFYQMSYSPNFRNMKGGDSPLGEALDWDSRRAAAERLLQEAISSWREAKEVLAEVKELQARQRREELSKTGMASQKLQQKSP</sequence>
<evidence type="ECO:0000250" key="1"/>
<evidence type="ECO:0000255" key="2">
    <source>
        <dbReference type="PROSITE-ProRule" id="PRU00145"/>
    </source>
</evidence>
<evidence type="ECO:0000256" key="3">
    <source>
        <dbReference type="SAM" id="MobiDB-lite"/>
    </source>
</evidence>
<evidence type="ECO:0000303" key="4">
    <source ref="2"/>
</evidence>
<evidence type="ECO:0000305" key="5"/>
<accession>A4IG55</accession>
<accession>A5A8K2</accession>
<accession>A8E7N4</accession>